<comment type="subcellular location">
    <subcellularLocation>
        <location evidence="2">Membrane</location>
        <topology evidence="2">Single-pass membrane protein</topology>
    </subcellularLocation>
</comment>
<comment type="PTM">
    <text evidence="2">This protein undergoes a protein self splicing that involves a post-translational excision of the intervening region (intein) followed by peptide ligation.</text>
</comment>
<comment type="similarity">
    <text evidence="2">Belongs to the GSP E family.</text>
</comment>
<feature type="chain" id="PRO_0000013122" description="Uncharacterized protein MJ0781, 1st part" evidence="1">
    <location>
        <begin position="1"/>
        <end position="404"/>
    </location>
</feature>
<feature type="chain" id="PRO_0000013123" description="Mja klbA intein" evidence="1">
    <location>
        <begin position="405"/>
        <end position="572"/>
    </location>
</feature>
<feature type="chain" id="PRO_0000013124" description="Uncharacterized protein MJ0781, 2nd part" evidence="1">
    <location>
        <begin position="573"/>
        <end position="721"/>
    </location>
</feature>
<feature type="transmembrane region" description="Helical" evidence="1">
    <location>
        <begin position="6"/>
        <end position="26"/>
    </location>
</feature>
<feature type="binding site" evidence="1">
    <location>
        <begin position="308"/>
        <end position="315"/>
    </location>
    <ligand>
        <name>ATP</name>
        <dbReference type="ChEBI" id="CHEBI:30616"/>
    </ligand>
</feature>
<feature type="helix" evidence="3">
    <location>
        <begin position="422"/>
        <end position="432"/>
    </location>
</feature>
<feature type="turn" evidence="3">
    <location>
        <begin position="434"/>
        <end position="436"/>
    </location>
</feature>
<feature type="strand" evidence="3">
    <location>
        <begin position="446"/>
        <end position="448"/>
    </location>
</feature>
<feature type="turn" evidence="3">
    <location>
        <begin position="450"/>
        <end position="452"/>
    </location>
</feature>
<feature type="strand" evidence="3">
    <location>
        <begin position="455"/>
        <end position="457"/>
    </location>
</feature>
<feature type="turn" evidence="3">
    <location>
        <begin position="461"/>
        <end position="464"/>
    </location>
</feature>
<feature type="strand" evidence="3">
    <location>
        <begin position="468"/>
        <end position="470"/>
    </location>
</feature>
<feature type="strand" evidence="3">
    <location>
        <begin position="473"/>
        <end position="477"/>
    </location>
</feature>
<feature type="strand" evidence="3">
    <location>
        <begin position="481"/>
        <end position="484"/>
    </location>
</feature>
<feature type="strand" evidence="3">
    <location>
        <begin position="501"/>
        <end position="506"/>
    </location>
</feature>
<feature type="strand" evidence="3">
    <location>
        <begin position="509"/>
        <end position="514"/>
    </location>
</feature>
<feature type="helix" evidence="3">
    <location>
        <begin position="515"/>
        <end position="517"/>
    </location>
</feature>
<feature type="strand" evidence="3">
    <location>
        <begin position="522"/>
        <end position="527"/>
    </location>
</feature>
<feature type="strand" evidence="3">
    <location>
        <begin position="529"/>
        <end position="536"/>
    </location>
</feature>
<feature type="strand" evidence="3">
    <location>
        <begin position="542"/>
        <end position="545"/>
    </location>
</feature>
<feature type="strand" evidence="3">
    <location>
        <begin position="549"/>
        <end position="553"/>
    </location>
</feature>
<feature type="turn" evidence="3">
    <location>
        <begin position="555"/>
        <end position="557"/>
    </location>
</feature>
<feature type="strand" evidence="3">
    <location>
        <begin position="558"/>
        <end position="564"/>
    </location>
</feature>
<feature type="strand" evidence="3">
    <location>
        <begin position="568"/>
        <end position="571"/>
    </location>
</feature>
<keyword id="KW-0002">3D-structure</keyword>
<keyword id="KW-0067">ATP-binding</keyword>
<keyword id="KW-0068">Autocatalytic cleavage</keyword>
<keyword id="KW-0472">Membrane</keyword>
<keyword id="KW-0547">Nucleotide-binding</keyword>
<keyword id="KW-0651">Protein splicing</keyword>
<keyword id="KW-1185">Reference proteome</keyword>
<keyword id="KW-0812">Transmembrane</keyword>
<keyword id="KW-1133">Transmembrane helix</keyword>
<reference key="1">
    <citation type="journal article" date="1996" name="Science">
        <title>Complete genome sequence of the methanogenic archaeon, Methanococcus jannaschii.</title>
        <authorList>
            <person name="Bult C.J."/>
            <person name="White O."/>
            <person name="Olsen G.J."/>
            <person name="Zhou L."/>
            <person name="Fleischmann R.D."/>
            <person name="Sutton G.G."/>
            <person name="Blake J.A."/>
            <person name="FitzGerald L.M."/>
            <person name="Clayton R.A."/>
            <person name="Gocayne J.D."/>
            <person name="Kerlavage A.R."/>
            <person name="Dougherty B.A."/>
            <person name="Tomb J.-F."/>
            <person name="Adams M.D."/>
            <person name="Reich C.I."/>
            <person name="Overbeek R."/>
            <person name="Kirkness E.F."/>
            <person name="Weinstock K.G."/>
            <person name="Merrick J.M."/>
            <person name="Glodek A."/>
            <person name="Scott J.L."/>
            <person name="Geoghagen N.S.M."/>
            <person name="Weidman J.F."/>
            <person name="Fuhrmann J.L."/>
            <person name="Nguyen D."/>
            <person name="Utterback T.R."/>
            <person name="Kelley J.M."/>
            <person name="Peterson J.D."/>
            <person name="Sadow P.W."/>
            <person name="Hanna M.C."/>
            <person name="Cotton M.D."/>
            <person name="Roberts K.M."/>
            <person name="Hurst M.A."/>
            <person name="Kaine B.P."/>
            <person name="Borodovsky M."/>
            <person name="Klenk H.-P."/>
            <person name="Fraser C.M."/>
            <person name="Smith H.O."/>
            <person name="Woese C.R."/>
            <person name="Venter J.C."/>
        </authorList>
    </citation>
    <scope>NUCLEOTIDE SEQUENCE [LARGE SCALE GENOMIC DNA]</scope>
    <source>
        <strain>ATCC 43067 / DSM 2661 / JAL-1 / JCM 10045 / NBRC 100440</strain>
    </source>
</reference>
<accession>Q58191</accession>
<dbReference type="EMBL" id="L77117">
    <property type="protein sequence ID" value="AAB98770.1"/>
    <property type="molecule type" value="Genomic_DNA"/>
</dbReference>
<dbReference type="PIR" id="E64397">
    <property type="entry name" value="E64397"/>
</dbReference>
<dbReference type="PDB" id="2JMZ">
    <property type="method" value="NMR"/>
    <property type="chains" value="A=398-577"/>
</dbReference>
<dbReference type="PDB" id="2JNQ">
    <property type="method" value="NMR"/>
    <property type="chains" value="A=398-577"/>
</dbReference>
<dbReference type="PDBsum" id="2JMZ"/>
<dbReference type="PDBsum" id="2JNQ"/>
<dbReference type="BMRB" id="Q58191"/>
<dbReference type="SMR" id="Q58191"/>
<dbReference type="STRING" id="243232.MJ_0781"/>
<dbReference type="PaxDb" id="243232-MJ_0781"/>
<dbReference type="EnsemblBacteria" id="AAB98770">
    <property type="protein sequence ID" value="AAB98770"/>
    <property type="gene ID" value="MJ_0781"/>
</dbReference>
<dbReference type="KEGG" id="mja:MJ_0781"/>
<dbReference type="eggNOG" id="arCOG01819">
    <property type="taxonomic scope" value="Archaea"/>
</dbReference>
<dbReference type="HOGENOM" id="CLU_005379_0_1_2"/>
<dbReference type="InParanoid" id="Q58191"/>
<dbReference type="PhylomeDB" id="Q58191"/>
<dbReference type="EvolutionaryTrace" id="Q58191"/>
<dbReference type="Proteomes" id="UP000000805">
    <property type="component" value="Chromosome"/>
</dbReference>
<dbReference type="GO" id="GO:0016020">
    <property type="term" value="C:membrane"/>
    <property type="evidence" value="ECO:0007669"/>
    <property type="project" value="UniProtKB-SubCell"/>
</dbReference>
<dbReference type="GO" id="GO:0005524">
    <property type="term" value="F:ATP binding"/>
    <property type="evidence" value="ECO:0007669"/>
    <property type="project" value="UniProtKB-KW"/>
</dbReference>
<dbReference type="GO" id="GO:0016887">
    <property type="term" value="F:ATP hydrolysis activity"/>
    <property type="evidence" value="ECO:0007669"/>
    <property type="project" value="InterPro"/>
</dbReference>
<dbReference type="GO" id="GO:0016539">
    <property type="term" value="P:intein-mediated protein splicing"/>
    <property type="evidence" value="ECO:0007669"/>
    <property type="project" value="InterPro"/>
</dbReference>
<dbReference type="CDD" id="cd00081">
    <property type="entry name" value="Hint"/>
    <property type="match status" value="1"/>
</dbReference>
<dbReference type="CDD" id="cd01130">
    <property type="entry name" value="VirB11-like_ATPase"/>
    <property type="match status" value="1"/>
</dbReference>
<dbReference type="Gene3D" id="3.30.450.380">
    <property type="match status" value="1"/>
</dbReference>
<dbReference type="Gene3D" id="2.170.16.10">
    <property type="entry name" value="Hedgehog/Intein (Hint) domain"/>
    <property type="match status" value="1"/>
</dbReference>
<dbReference type="Gene3D" id="3.40.50.300">
    <property type="entry name" value="P-loop containing nucleotide triphosphate hydrolases"/>
    <property type="match status" value="2"/>
</dbReference>
<dbReference type="InterPro" id="IPR003586">
    <property type="entry name" value="Hint_dom_C"/>
</dbReference>
<dbReference type="InterPro" id="IPR003587">
    <property type="entry name" value="Hint_dom_N"/>
</dbReference>
<dbReference type="InterPro" id="IPR036844">
    <property type="entry name" value="Hint_dom_sf"/>
</dbReference>
<dbReference type="InterPro" id="IPR030934">
    <property type="entry name" value="Intein_C"/>
</dbReference>
<dbReference type="InterPro" id="IPR006141">
    <property type="entry name" value="Intein_N"/>
</dbReference>
<dbReference type="InterPro" id="IPR027417">
    <property type="entry name" value="P-loop_NTPase"/>
</dbReference>
<dbReference type="InterPro" id="IPR001482">
    <property type="entry name" value="T2SS/T4SS_dom"/>
</dbReference>
<dbReference type="InterPro" id="IPR050921">
    <property type="entry name" value="T4SS_GSP_E_ATPase"/>
</dbReference>
<dbReference type="NCBIfam" id="TIGR01443">
    <property type="entry name" value="intein_Cterm"/>
    <property type="match status" value="1"/>
</dbReference>
<dbReference type="NCBIfam" id="TIGR01445">
    <property type="entry name" value="intein_Nterm"/>
    <property type="match status" value="1"/>
</dbReference>
<dbReference type="PANTHER" id="PTHR30486">
    <property type="entry name" value="TWITCHING MOTILITY PROTEIN PILT"/>
    <property type="match status" value="1"/>
</dbReference>
<dbReference type="PANTHER" id="PTHR30486:SF15">
    <property type="entry name" value="TYPE II_IV SECRETION SYSTEM ATPASE"/>
    <property type="match status" value="1"/>
</dbReference>
<dbReference type="Pfam" id="PF14890">
    <property type="entry name" value="Intein_splicing"/>
    <property type="match status" value="1"/>
</dbReference>
<dbReference type="Pfam" id="PF00437">
    <property type="entry name" value="T2SSE"/>
    <property type="match status" value="1"/>
</dbReference>
<dbReference type="SMART" id="SM00305">
    <property type="entry name" value="HintC"/>
    <property type="match status" value="1"/>
</dbReference>
<dbReference type="SMART" id="SM00306">
    <property type="entry name" value="HintN"/>
    <property type="match status" value="1"/>
</dbReference>
<dbReference type="SUPFAM" id="SSF51294">
    <property type="entry name" value="Hedgehog/intein (Hint) domain"/>
    <property type="match status" value="1"/>
</dbReference>
<dbReference type="SUPFAM" id="SSF52540">
    <property type="entry name" value="P-loop containing nucleoside triphosphate hydrolases"/>
    <property type="match status" value="1"/>
</dbReference>
<dbReference type="PROSITE" id="PS50818">
    <property type="entry name" value="INTEIN_C_TER"/>
    <property type="match status" value="1"/>
</dbReference>
<dbReference type="PROSITE" id="PS50817">
    <property type="entry name" value="INTEIN_N_TER"/>
    <property type="match status" value="1"/>
</dbReference>
<name>Y781_METJA</name>
<organism>
    <name type="scientific">Methanocaldococcus jannaschii (strain ATCC 43067 / DSM 2661 / JAL-1 / JCM 10045 / NBRC 100440)</name>
    <name type="common">Methanococcus jannaschii</name>
    <dbReference type="NCBI Taxonomy" id="243232"/>
    <lineage>
        <taxon>Archaea</taxon>
        <taxon>Methanobacteriati</taxon>
        <taxon>Methanobacteriota</taxon>
        <taxon>Methanomada group</taxon>
        <taxon>Methanococci</taxon>
        <taxon>Methanococcales</taxon>
        <taxon>Methanocaldococcaceae</taxon>
        <taxon>Methanocaldococcus</taxon>
    </lineage>
</organism>
<sequence>MIIKNQLIFVNFYVILIIWWFVMGILDKIQKKSEKIEKEKKSETVIPSDTKLKPIEPHPTINKKATVGNDETILDTYSIKIDEIEMEVVIKREEGYIYYLVPEIDKINMSLSKLTKDHLNHIKSQISDLGLIEYDQIREYLTNFSMRYNLAIPYIDSLAKFFYLVIGRLGLLEVPLNDDRLEEVMVNGYNVPVFVFHRKHQMCETNIVLDRNEVDRIIESIANLVNRPIDSRVPMLDAFLPDGSRVNATTADITMNGATLTIRKFSKNPLTVIDLINFGTLDIDTAAFLWQAVEGYFGAKPANTLIAGGTGSGKTTLLNVLSLFSMYNERIITIEDTPELQIPHKHVIKMVTRPARPGMPEYEVTMDDLIKNALRMRPDRIFVGEVRGKEAHSLLVAMNTGHDGALAYDEPIYLSDGNIINIGEFVDKFFKKYKNSIKKEDNGFGWIDIGNENIYIKSFNKLSLIIEDKRILRVWRKKYSGKLIKITTKNRREITLTHDHPVYISKTGEVLEINAEMVKVGDYIYIPKNNTINLDEVIKVETVDYNGHIYDLTVEDNHTYIAGKNEGFAVSNCSGTLHANSADEAILRLTSPPMNVPKIMLTALNFIINQQRIRRAGKTIRRILGIVEIVKGGGEGHEFAKTTLYEYNGLKDSLERRGICMWEEEVCEIAGITKEELLRDRENRKKVLSYLYKNNIRKLENVSDYIMRYQVDPEKLLRSIR</sequence>
<protein>
    <recommendedName>
        <fullName>Uncharacterized protein MJ0781</fullName>
    </recommendedName>
    <component>
        <recommendedName>
            <fullName>Mja klbA intein</fullName>
        </recommendedName>
    </component>
</protein>
<evidence type="ECO:0000255" key="1"/>
<evidence type="ECO:0000305" key="2"/>
<evidence type="ECO:0007829" key="3">
    <source>
        <dbReference type="PDB" id="2JMZ"/>
    </source>
</evidence>
<gene>
    <name type="ordered locus">MJ0781</name>
</gene>
<proteinExistence type="evidence at protein level"/>